<organismHost>
    <name type="scientific">Odocoileus virginianus</name>
    <name type="common">White-tailed deer</name>
    <dbReference type="NCBI Taxonomy" id="9874"/>
</organismHost>
<feature type="chain" id="PRO_0000133468" description="Protein E7">
    <location>
        <begin position="1"/>
        <end position="102"/>
    </location>
</feature>
<feature type="zinc finger region" evidence="1">
    <location>
        <begin position="61"/>
        <end position="97"/>
    </location>
</feature>
<feature type="region of interest" description="E7 terminal domain" evidence="1">
    <location>
        <begin position="1"/>
        <end position="36"/>
    </location>
</feature>
<feature type="short sequence motif" description="Nuclear export signal" evidence="1">
    <location>
        <begin position="79"/>
        <end position="87"/>
    </location>
</feature>
<organism>
    <name type="scientific">Odocoileus virginianus papillomavirus 1</name>
    <name type="common">DPV</name>
    <name type="synonym">Deer papillomavirus</name>
    <dbReference type="NCBI Taxonomy" id="2772504"/>
    <lineage>
        <taxon>Viruses</taxon>
        <taxon>Monodnaviria</taxon>
        <taxon>Shotokuvirae</taxon>
        <taxon>Cossaviricota</taxon>
        <taxon>Papovaviricetes</taxon>
        <taxon>Zurhausenvirales</taxon>
        <taxon>Papillomaviridae</taxon>
        <taxon>Firstpapillomavirinae</taxon>
        <taxon>Deltapapillomavirus</taxon>
        <taxon>Deer papillomavirus</taxon>
    </lineage>
</organism>
<comment type="function">
    <text evidence="1">Plays a role in viral genome replication by driving entry of quiescent cells into the cell cycle. Stimulation of progression from G1 to S phase allows the virus to efficiently use the cellular DNA replicating machinery to achieve viral genome replication. E7 protein has both transforming and trans-activating activities. Induces the disassembly of the E2F1 transcription factor from RB1, with subsequent transcriptional activation of E2F1-regulated S-phase genes. Interferes with host histone deacetylation mediated by HDAC1 and HDAC2, leading to transcription activation. Also plays a role in the inhibition of both antiviral and antiproliferative functions of host interferon alpha. Interaction with host TMEM173/STING impairs the ability of TMEM173/STING to sense cytosolic DNA and promote the production of type I interferon (IFN-alpha and IFN-beta).</text>
</comment>
<comment type="subunit">
    <text evidence="1">Homodimer. Homooligomer. Interacts with host RB1; this interaction induces dissociation of RB1-E2F1 complex thereby disrupting RB1 activity. Interacts with host EP300; this interaction represses EP300 transcriptional activity. Interacts with protein E2; this interaction inhibits E7 oncogenic activity. Interacts with host TMEM173/STING; this interaction impairs the ability of TMEM173/STING to sense cytosolic DNA and promote the production of type I interferon (IFN-alpha and IFN-beta).</text>
</comment>
<comment type="subcellular location">
    <subcellularLocation>
        <location evidence="1">Host cytoplasm</location>
    </subcellularLocation>
    <subcellularLocation>
        <location evidence="1">Host nucleus</location>
    </subcellularLocation>
    <text evidence="1">Predominantly found in the host nucleus.</text>
</comment>
<comment type="domain">
    <text evidence="1">The E7 terminal domain is an intrinsically disordered domain, whose flexibility and conformational transitions confer target adaptability to the oncoprotein. It allows adaptation to a variety of protein targets and exposes the PEST degradation sequence that regulates its turnover in the cell.</text>
</comment>
<comment type="PTM">
    <text evidence="1">Highly phosphorylated.</text>
</comment>
<comment type="similarity">
    <text evidence="1">Belongs to the papillomaviridae E7 protein family.</text>
</comment>
<evidence type="ECO:0000255" key="1">
    <source>
        <dbReference type="HAMAP-Rule" id="MF_04004"/>
    </source>
</evidence>
<keyword id="KW-0010">Activator</keyword>
<keyword id="KW-0238">DNA-binding</keyword>
<keyword id="KW-0244">Early protein</keyword>
<keyword id="KW-1078">G1/S host cell cycle checkpoint dysregulation by virus</keyword>
<keyword id="KW-1035">Host cytoplasm</keyword>
<keyword id="KW-1048">Host nucleus</keyword>
<keyword id="KW-0945">Host-virus interaction</keyword>
<keyword id="KW-1090">Inhibition of host innate immune response by virus</keyword>
<keyword id="KW-1114">Inhibition of host interferon signaling pathway by virus</keyword>
<keyword id="KW-0922">Interferon antiviral system evasion</keyword>
<keyword id="KW-0479">Metal-binding</keyword>
<keyword id="KW-1121">Modulation of host cell cycle by virus</keyword>
<keyword id="KW-0553">Oncogene</keyword>
<keyword id="KW-1185">Reference proteome</keyword>
<keyword id="KW-0804">Transcription</keyword>
<keyword id="KW-0805">Transcription regulation</keyword>
<keyword id="KW-0899">Viral immunoevasion</keyword>
<keyword id="KW-0862">Zinc</keyword>
<keyword id="KW-0863">Zinc-finger</keyword>
<sequence>MACARPLTGRTLPADESPCLTLILEPVSGEAAKNSTPVVVDKPGKPPPKRHRRQYNVTVSCNDCDKRLNFSVKTTCSTILTLQQLLTEDLDFLCSFCEAKNG</sequence>
<dbReference type="EMBL" id="M11910">
    <property type="protein sequence ID" value="AAA66842.1"/>
    <property type="molecule type" value="Genomic_DNA"/>
</dbReference>
<dbReference type="PIR" id="A03693">
    <property type="entry name" value="W7WLDP"/>
</dbReference>
<dbReference type="RefSeq" id="NP_041294.1">
    <property type="nucleotide sequence ID" value="NC_001523.1"/>
</dbReference>
<dbReference type="SMR" id="P03131"/>
<dbReference type="GeneID" id="1488980"/>
<dbReference type="KEGG" id="vg:1488980"/>
<dbReference type="Proteomes" id="UP000009185">
    <property type="component" value="Segment"/>
</dbReference>
<dbReference type="GO" id="GO:0030430">
    <property type="term" value="C:host cell cytoplasm"/>
    <property type="evidence" value="ECO:0007669"/>
    <property type="project" value="UniProtKB-SubCell"/>
</dbReference>
<dbReference type="GO" id="GO:0042025">
    <property type="term" value="C:host cell nucleus"/>
    <property type="evidence" value="ECO:0007669"/>
    <property type="project" value="UniProtKB-SubCell"/>
</dbReference>
<dbReference type="GO" id="GO:0003677">
    <property type="term" value="F:DNA binding"/>
    <property type="evidence" value="ECO:0007669"/>
    <property type="project" value="UniProtKB-UniRule"/>
</dbReference>
<dbReference type="GO" id="GO:0003700">
    <property type="term" value="F:DNA-binding transcription factor activity"/>
    <property type="evidence" value="ECO:0007669"/>
    <property type="project" value="UniProtKB-UniRule"/>
</dbReference>
<dbReference type="GO" id="GO:0019904">
    <property type="term" value="F:protein domain specific binding"/>
    <property type="evidence" value="ECO:0007669"/>
    <property type="project" value="UniProtKB-UniRule"/>
</dbReference>
<dbReference type="GO" id="GO:0008270">
    <property type="term" value="F:zinc ion binding"/>
    <property type="evidence" value="ECO:0007669"/>
    <property type="project" value="UniProtKB-KW"/>
</dbReference>
<dbReference type="GO" id="GO:0006351">
    <property type="term" value="P:DNA-templated transcription"/>
    <property type="evidence" value="ECO:0007669"/>
    <property type="project" value="UniProtKB-UniRule"/>
</dbReference>
<dbReference type="GO" id="GO:0039645">
    <property type="term" value="P:symbiont-mediated perturbation of host cell cycle G1/S transition checkpoint"/>
    <property type="evidence" value="ECO:0007669"/>
    <property type="project" value="UniProtKB-UniRule"/>
</dbReference>
<dbReference type="GO" id="GO:0052170">
    <property type="term" value="P:symbiont-mediated suppression of host innate immune response"/>
    <property type="evidence" value="ECO:0007669"/>
    <property type="project" value="UniProtKB-KW"/>
</dbReference>
<dbReference type="GO" id="GO:0039502">
    <property type="term" value="P:symbiont-mediated suppression of host type I interferon-mediated signaling pathway"/>
    <property type="evidence" value="ECO:0007669"/>
    <property type="project" value="UniProtKB-UniRule"/>
</dbReference>
<dbReference type="Gene3D" id="3.30.160.330">
    <property type="match status" value="1"/>
</dbReference>
<dbReference type="HAMAP" id="MF_04004">
    <property type="entry name" value="PPV_E7"/>
    <property type="match status" value="1"/>
</dbReference>
<dbReference type="InterPro" id="IPR000148">
    <property type="entry name" value="Papilloma_E7"/>
</dbReference>
<dbReference type="Pfam" id="PF00527">
    <property type="entry name" value="E7"/>
    <property type="match status" value="1"/>
</dbReference>
<dbReference type="SUPFAM" id="SSF161234">
    <property type="entry name" value="E7 C-terminal domain-like"/>
    <property type="match status" value="1"/>
</dbReference>
<gene>
    <name evidence="1" type="primary">E7</name>
</gene>
<reference key="1">
    <citation type="journal article" date="1985" name="J. Virol.">
        <title>Molecular cloning and nucleotide sequence of deer papillomavirus.</title>
        <authorList>
            <person name="Groff D.E."/>
            <person name="Lancaster W.D."/>
        </authorList>
    </citation>
    <scope>NUCLEOTIDE SEQUENCE [GENOMIC DNA]</scope>
</reference>
<proteinExistence type="inferred from homology"/>
<protein>
    <recommendedName>
        <fullName evidence="1">Protein E7</fullName>
    </recommendedName>
</protein>
<accession>P03131</accession>
<name>VE7_OVPVD</name>